<gene>
    <name type="primary">MAP10</name>
    <name type="synonym">KIAA1383</name>
    <name type="synonym">MTR120</name>
</gene>
<feature type="chain" id="PRO_0000050794" description="Microtubule-associated protein 10">
    <location>
        <begin position="1"/>
        <end position="905"/>
    </location>
</feature>
<feature type="region of interest" description="Disordered" evidence="1">
    <location>
        <begin position="30"/>
        <end position="51"/>
    </location>
</feature>
<feature type="region of interest" description="Disordered" evidence="1">
    <location>
        <begin position="199"/>
        <end position="235"/>
    </location>
</feature>
<feature type="region of interest" description="Disordered" evidence="1">
    <location>
        <begin position="329"/>
        <end position="362"/>
    </location>
</feature>
<feature type="region of interest" description="Disordered" evidence="1">
    <location>
        <begin position="434"/>
        <end position="458"/>
    </location>
</feature>
<feature type="region of interest" description="Disordered" evidence="1">
    <location>
        <begin position="547"/>
        <end position="586"/>
    </location>
</feature>
<feature type="region of interest" description="Disordered" evidence="1">
    <location>
        <begin position="721"/>
        <end position="772"/>
    </location>
</feature>
<feature type="region of interest" description="Disordered" evidence="1">
    <location>
        <begin position="786"/>
        <end position="855"/>
    </location>
</feature>
<feature type="compositionally biased region" description="Acidic residues" evidence="1">
    <location>
        <begin position="34"/>
        <end position="43"/>
    </location>
</feature>
<feature type="compositionally biased region" description="Low complexity" evidence="1">
    <location>
        <begin position="208"/>
        <end position="227"/>
    </location>
</feature>
<feature type="compositionally biased region" description="Basic and acidic residues" evidence="1">
    <location>
        <begin position="443"/>
        <end position="453"/>
    </location>
</feature>
<feature type="compositionally biased region" description="Polar residues" evidence="1">
    <location>
        <begin position="567"/>
        <end position="579"/>
    </location>
</feature>
<feature type="compositionally biased region" description="Basic and acidic residues" evidence="1">
    <location>
        <begin position="721"/>
        <end position="736"/>
    </location>
</feature>
<feature type="compositionally biased region" description="Polar residues" evidence="1">
    <location>
        <begin position="737"/>
        <end position="748"/>
    </location>
</feature>
<feature type="compositionally biased region" description="Low complexity" evidence="1">
    <location>
        <begin position="790"/>
        <end position="801"/>
    </location>
</feature>
<feature type="compositionally biased region" description="Polar residues" evidence="1">
    <location>
        <begin position="830"/>
        <end position="855"/>
    </location>
</feature>
<name>MAP10_HUMAN</name>
<sequence length="905" mass="100345">MAASLSERLFSLELLVDWVRLEARLLPSPAAAVEQEEEEEEKEQGEASSPRGLCPAVAFRLLDFPTLLVYPPDGPGAPAAEPWPGVIRFGRGKSCLFRLQPATLHCRLLRTPLATLLLQLPPGRPTPTPQLLGACDISLATAAHRVVGPAASGCSHRHRGRFPLHNRVGERTGDIALAYRLTDLGSRLLSQLERPLTFTRTGGGAEVSPQTQQERQQLQQPASQPSPKEADKPLGELEIPEAQKDLKEMVKSKAECDNVGSVENGKTNSVVTCSGAGNGRNVSSLNEEVTELDMETNIFCPPPLYYTNLTQEKPPPAQAKITIEPQMNAPEEMDDASPEKKRVNPPAHRSCLKHPSSAAHEHPPMLVNPPHIQNIGATNQTCQTEQNRINTIRQLPLLNALLVELSLLYDQPVTSPAHIHPHLAWLYRTEDKKSPESSAKSTCRSEAKKDKRSVGGCEKSVSLQYKKNQIENYKEDKYSEKSSGALHKRVPKGRLLYGLTNTLRLRLKLTNPDMLVVHEKRELYRKRQSQMLGTKFRIPSSKVKLLSSAEQSQKPQLPEDKYLDSDASFTENSDTSRQISGVFDEPSTSKETKLKYATEKKTVDCSKNRINNVSLEEVVSPANSIIPERLTPTNILGGNVEMKIQSPCVFQQDAVVDRIVDKEIDIRQVKTTDNDILMADISDKRTGKNSCYENISELKYSDDLSSPCYSEDFCTSEDTSRSFKAHDSSSRTENPKHSQYTSKSSDTGVSKKKNSSDRSSILSPPFSAGSPVHSYRKFHISKTQDKSLEEASSISASDLSSTHWTEQKENQIDQNSMHNSEITKRAQDISVKTRSSWKSLEKSQSPQTSQVSSYLPSNVSELNVLDSSTSDHFEEGNDDVGSLNISKQCKDICELVINKLPGYTM</sequence>
<comment type="function">
    <text evidence="2">Microtubule-associated protein (MAP) that plays a role in the regulation of cell division; promotes microtubule stability and participates in the organization of the spindle midzone and normal progress of cytokinesis.</text>
</comment>
<comment type="subunit">
    <text evidence="2">Interacts (via middle region) with microtubules.</text>
</comment>
<comment type="subcellular location">
    <subcellularLocation>
        <location evidence="2">Cytoplasm</location>
        <location evidence="2">Cytoskeleton</location>
    </subcellularLocation>
    <subcellularLocation>
        <location evidence="2">Cytoplasm</location>
        <location evidence="2">Cytoskeleton</location>
        <location evidence="2">Spindle pole</location>
    </subcellularLocation>
    <subcellularLocation>
        <location evidence="2">Cytoplasm</location>
        <location evidence="2">Cytoskeleton</location>
        <location evidence="2">Microtubule organizing center</location>
        <location evidence="2">Centrosome</location>
    </subcellularLocation>
    <subcellularLocation>
        <location evidence="2">Midbody</location>
    </subcellularLocation>
    <text>Localized at stabilized microtubules (MTs) during interphase and to the mitotic apparatus during mitosis. Localized at spindle poles in metaphase and spindle midzone during telophase. Colocalized with Polo-like kinase PLK1 to the center of spindle midzone. Localized at the midbody during cytokinesis. Colocalized with acetylated-tubulin at MTs.</text>
</comment>
<comment type="tissue specificity">
    <text evidence="2">Expressed in different cell lines (at protein level).</text>
</comment>
<comment type="sequence caution" evidence="3">
    <conflict type="erroneous initiation">
        <sequence resource="EMBL-CDS" id="BAA92621"/>
    </conflict>
    <text>Extended N-terminus.</text>
</comment>
<protein>
    <recommendedName>
        <fullName>Microtubule-associated protein 10</fullName>
    </recommendedName>
    <alternativeName>
        <fullName>Microtubule regulator of 120 KDa</fullName>
    </alternativeName>
</protein>
<evidence type="ECO:0000256" key="1">
    <source>
        <dbReference type="SAM" id="MobiDB-lite"/>
    </source>
</evidence>
<evidence type="ECO:0000269" key="2">
    <source>
    </source>
</evidence>
<evidence type="ECO:0000305" key="3"/>
<keyword id="KW-0131">Cell cycle</keyword>
<keyword id="KW-0132">Cell division</keyword>
<keyword id="KW-0963">Cytoplasm</keyword>
<keyword id="KW-0206">Cytoskeleton</keyword>
<keyword id="KW-1267">Proteomics identification</keyword>
<keyword id="KW-1185">Reference proteome</keyword>
<accession>Q9P2G4</accession>
<accession>A8K2F1</accession>
<accession>Q32MI1</accession>
<accession>Q58EZ9</accession>
<accession>Q5VV83</accession>
<reference key="1">
    <citation type="journal article" date="2000" name="DNA Res.">
        <title>Prediction of the coding sequences of unidentified human genes. XVI. The complete sequences of 150 new cDNA clones from brain which code for large proteins in vitro.</title>
        <authorList>
            <person name="Nagase T."/>
            <person name="Kikuno R."/>
            <person name="Ishikawa K."/>
            <person name="Hirosawa M."/>
            <person name="Ohara O."/>
        </authorList>
    </citation>
    <scope>NUCLEOTIDE SEQUENCE [LARGE SCALE MRNA]</scope>
    <source>
        <tissue>Brain</tissue>
    </source>
</reference>
<reference key="2">
    <citation type="journal article" date="2004" name="Nat. Genet.">
        <title>Complete sequencing and characterization of 21,243 full-length human cDNAs.</title>
        <authorList>
            <person name="Ota T."/>
            <person name="Suzuki Y."/>
            <person name="Nishikawa T."/>
            <person name="Otsuki T."/>
            <person name="Sugiyama T."/>
            <person name="Irie R."/>
            <person name="Wakamatsu A."/>
            <person name="Hayashi K."/>
            <person name="Sato H."/>
            <person name="Nagai K."/>
            <person name="Kimura K."/>
            <person name="Makita H."/>
            <person name="Sekine M."/>
            <person name="Obayashi M."/>
            <person name="Nishi T."/>
            <person name="Shibahara T."/>
            <person name="Tanaka T."/>
            <person name="Ishii S."/>
            <person name="Yamamoto J."/>
            <person name="Saito K."/>
            <person name="Kawai Y."/>
            <person name="Isono Y."/>
            <person name="Nakamura Y."/>
            <person name="Nagahari K."/>
            <person name="Murakami K."/>
            <person name="Yasuda T."/>
            <person name="Iwayanagi T."/>
            <person name="Wagatsuma M."/>
            <person name="Shiratori A."/>
            <person name="Sudo H."/>
            <person name="Hosoiri T."/>
            <person name="Kaku Y."/>
            <person name="Kodaira H."/>
            <person name="Kondo H."/>
            <person name="Sugawara M."/>
            <person name="Takahashi M."/>
            <person name="Kanda K."/>
            <person name="Yokoi T."/>
            <person name="Furuya T."/>
            <person name="Kikkawa E."/>
            <person name="Omura Y."/>
            <person name="Abe K."/>
            <person name="Kamihara K."/>
            <person name="Katsuta N."/>
            <person name="Sato K."/>
            <person name="Tanikawa M."/>
            <person name="Yamazaki M."/>
            <person name="Ninomiya K."/>
            <person name="Ishibashi T."/>
            <person name="Yamashita H."/>
            <person name="Murakawa K."/>
            <person name="Fujimori K."/>
            <person name="Tanai H."/>
            <person name="Kimata M."/>
            <person name="Watanabe M."/>
            <person name="Hiraoka S."/>
            <person name="Chiba Y."/>
            <person name="Ishida S."/>
            <person name="Ono Y."/>
            <person name="Takiguchi S."/>
            <person name="Watanabe S."/>
            <person name="Yosida M."/>
            <person name="Hotuta T."/>
            <person name="Kusano J."/>
            <person name="Kanehori K."/>
            <person name="Takahashi-Fujii A."/>
            <person name="Hara H."/>
            <person name="Tanase T.-O."/>
            <person name="Nomura Y."/>
            <person name="Togiya S."/>
            <person name="Komai F."/>
            <person name="Hara R."/>
            <person name="Takeuchi K."/>
            <person name="Arita M."/>
            <person name="Imose N."/>
            <person name="Musashino K."/>
            <person name="Yuuki H."/>
            <person name="Oshima A."/>
            <person name="Sasaki N."/>
            <person name="Aotsuka S."/>
            <person name="Yoshikawa Y."/>
            <person name="Matsunawa H."/>
            <person name="Ichihara T."/>
            <person name="Shiohata N."/>
            <person name="Sano S."/>
            <person name="Moriya S."/>
            <person name="Momiyama H."/>
            <person name="Satoh N."/>
            <person name="Takami S."/>
            <person name="Terashima Y."/>
            <person name="Suzuki O."/>
            <person name="Nakagawa S."/>
            <person name="Senoh A."/>
            <person name="Mizoguchi H."/>
            <person name="Goto Y."/>
            <person name="Shimizu F."/>
            <person name="Wakebe H."/>
            <person name="Hishigaki H."/>
            <person name="Watanabe T."/>
            <person name="Sugiyama A."/>
            <person name="Takemoto M."/>
            <person name="Kawakami B."/>
            <person name="Yamazaki M."/>
            <person name="Watanabe K."/>
            <person name="Kumagai A."/>
            <person name="Itakura S."/>
            <person name="Fukuzumi Y."/>
            <person name="Fujimori Y."/>
            <person name="Komiyama M."/>
            <person name="Tashiro H."/>
            <person name="Tanigami A."/>
            <person name="Fujiwara T."/>
            <person name="Ono T."/>
            <person name="Yamada K."/>
            <person name="Fujii Y."/>
            <person name="Ozaki K."/>
            <person name="Hirao M."/>
            <person name="Ohmori Y."/>
            <person name="Kawabata A."/>
            <person name="Hikiji T."/>
            <person name="Kobatake N."/>
            <person name="Inagaki H."/>
            <person name="Ikema Y."/>
            <person name="Okamoto S."/>
            <person name="Okitani R."/>
            <person name="Kawakami T."/>
            <person name="Noguchi S."/>
            <person name="Itoh T."/>
            <person name="Shigeta K."/>
            <person name="Senba T."/>
            <person name="Matsumura K."/>
            <person name="Nakajima Y."/>
            <person name="Mizuno T."/>
            <person name="Morinaga M."/>
            <person name="Sasaki M."/>
            <person name="Togashi T."/>
            <person name="Oyama M."/>
            <person name="Hata H."/>
            <person name="Watanabe M."/>
            <person name="Komatsu T."/>
            <person name="Mizushima-Sugano J."/>
            <person name="Satoh T."/>
            <person name="Shirai Y."/>
            <person name="Takahashi Y."/>
            <person name="Nakagawa K."/>
            <person name="Okumura K."/>
            <person name="Nagase T."/>
            <person name="Nomura N."/>
            <person name="Kikuchi H."/>
            <person name="Masuho Y."/>
            <person name="Yamashita R."/>
            <person name="Nakai K."/>
            <person name="Yada T."/>
            <person name="Nakamura Y."/>
            <person name="Ohara O."/>
            <person name="Isogai T."/>
            <person name="Sugano S."/>
        </authorList>
    </citation>
    <scope>NUCLEOTIDE SEQUENCE [LARGE SCALE MRNA]</scope>
    <source>
        <tissue>Thalamus</tissue>
    </source>
</reference>
<reference key="3">
    <citation type="journal article" date="2006" name="Nature">
        <title>The DNA sequence and biological annotation of human chromosome 1.</title>
        <authorList>
            <person name="Gregory S.G."/>
            <person name="Barlow K.F."/>
            <person name="McLay K.E."/>
            <person name="Kaul R."/>
            <person name="Swarbreck D."/>
            <person name="Dunham A."/>
            <person name="Scott C.E."/>
            <person name="Howe K.L."/>
            <person name="Woodfine K."/>
            <person name="Spencer C.C.A."/>
            <person name="Jones M.C."/>
            <person name="Gillson C."/>
            <person name="Searle S."/>
            <person name="Zhou Y."/>
            <person name="Kokocinski F."/>
            <person name="McDonald L."/>
            <person name="Evans R."/>
            <person name="Phillips K."/>
            <person name="Atkinson A."/>
            <person name="Cooper R."/>
            <person name="Jones C."/>
            <person name="Hall R.E."/>
            <person name="Andrews T.D."/>
            <person name="Lloyd C."/>
            <person name="Ainscough R."/>
            <person name="Almeida J.P."/>
            <person name="Ambrose K.D."/>
            <person name="Anderson F."/>
            <person name="Andrew R.W."/>
            <person name="Ashwell R.I.S."/>
            <person name="Aubin K."/>
            <person name="Babbage A.K."/>
            <person name="Bagguley C.L."/>
            <person name="Bailey J."/>
            <person name="Beasley H."/>
            <person name="Bethel G."/>
            <person name="Bird C.P."/>
            <person name="Bray-Allen S."/>
            <person name="Brown J.Y."/>
            <person name="Brown A.J."/>
            <person name="Buckley D."/>
            <person name="Burton J."/>
            <person name="Bye J."/>
            <person name="Carder C."/>
            <person name="Chapman J.C."/>
            <person name="Clark S.Y."/>
            <person name="Clarke G."/>
            <person name="Clee C."/>
            <person name="Cobley V."/>
            <person name="Collier R.E."/>
            <person name="Corby N."/>
            <person name="Coville G.J."/>
            <person name="Davies J."/>
            <person name="Deadman R."/>
            <person name="Dunn M."/>
            <person name="Earthrowl M."/>
            <person name="Ellington A.G."/>
            <person name="Errington H."/>
            <person name="Frankish A."/>
            <person name="Frankland J."/>
            <person name="French L."/>
            <person name="Garner P."/>
            <person name="Garnett J."/>
            <person name="Gay L."/>
            <person name="Ghori M.R.J."/>
            <person name="Gibson R."/>
            <person name="Gilby L.M."/>
            <person name="Gillett W."/>
            <person name="Glithero R.J."/>
            <person name="Grafham D.V."/>
            <person name="Griffiths C."/>
            <person name="Griffiths-Jones S."/>
            <person name="Grocock R."/>
            <person name="Hammond S."/>
            <person name="Harrison E.S.I."/>
            <person name="Hart E."/>
            <person name="Haugen E."/>
            <person name="Heath P.D."/>
            <person name="Holmes S."/>
            <person name="Holt K."/>
            <person name="Howden P.J."/>
            <person name="Hunt A.R."/>
            <person name="Hunt S.E."/>
            <person name="Hunter G."/>
            <person name="Isherwood J."/>
            <person name="James R."/>
            <person name="Johnson C."/>
            <person name="Johnson D."/>
            <person name="Joy A."/>
            <person name="Kay M."/>
            <person name="Kershaw J.K."/>
            <person name="Kibukawa M."/>
            <person name="Kimberley A.M."/>
            <person name="King A."/>
            <person name="Knights A.J."/>
            <person name="Lad H."/>
            <person name="Laird G."/>
            <person name="Lawlor S."/>
            <person name="Leongamornlert D.A."/>
            <person name="Lloyd D.M."/>
            <person name="Loveland J."/>
            <person name="Lovell J."/>
            <person name="Lush M.J."/>
            <person name="Lyne R."/>
            <person name="Martin S."/>
            <person name="Mashreghi-Mohammadi M."/>
            <person name="Matthews L."/>
            <person name="Matthews N.S.W."/>
            <person name="McLaren S."/>
            <person name="Milne S."/>
            <person name="Mistry S."/>
            <person name="Moore M.J.F."/>
            <person name="Nickerson T."/>
            <person name="O'Dell C.N."/>
            <person name="Oliver K."/>
            <person name="Palmeiri A."/>
            <person name="Palmer S.A."/>
            <person name="Parker A."/>
            <person name="Patel D."/>
            <person name="Pearce A.V."/>
            <person name="Peck A.I."/>
            <person name="Pelan S."/>
            <person name="Phelps K."/>
            <person name="Phillimore B.J."/>
            <person name="Plumb R."/>
            <person name="Rajan J."/>
            <person name="Raymond C."/>
            <person name="Rouse G."/>
            <person name="Saenphimmachak C."/>
            <person name="Sehra H.K."/>
            <person name="Sheridan E."/>
            <person name="Shownkeen R."/>
            <person name="Sims S."/>
            <person name="Skuce C.D."/>
            <person name="Smith M."/>
            <person name="Steward C."/>
            <person name="Subramanian S."/>
            <person name="Sycamore N."/>
            <person name="Tracey A."/>
            <person name="Tromans A."/>
            <person name="Van Helmond Z."/>
            <person name="Wall M."/>
            <person name="Wallis J.M."/>
            <person name="White S."/>
            <person name="Whitehead S.L."/>
            <person name="Wilkinson J.E."/>
            <person name="Willey D.L."/>
            <person name="Williams H."/>
            <person name="Wilming L."/>
            <person name="Wray P.W."/>
            <person name="Wu Z."/>
            <person name="Coulson A."/>
            <person name="Vaudin M."/>
            <person name="Sulston J.E."/>
            <person name="Durbin R.M."/>
            <person name="Hubbard T."/>
            <person name="Wooster R."/>
            <person name="Dunham I."/>
            <person name="Carter N.P."/>
            <person name="McVean G."/>
            <person name="Ross M.T."/>
            <person name="Harrow J."/>
            <person name="Olson M.V."/>
            <person name="Beck S."/>
            <person name="Rogers J."/>
            <person name="Bentley D.R."/>
        </authorList>
    </citation>
    <scope>NUCLEOTIDE SEQUENCE [LARGE SCALE GENOMIC DNA]</scope>
</reference>
<reference key="4">
    <citation type="journal article" date="2004" name="Genome Res.">
        <title>The status, quality, and expansion of the NIH full-length cDNA project: the Mammalian Gene Collection (MGC).</title>
        <authorList>
            <consortium name="The MGC Project Team"/>
        </authorList>
    </citation>
    <scope>NUCLEOTIDE SEQUENCE [LARGE SCALE MRNA]</scope>
    <source>
        <tissue>Testis</tissue>
    </source>
</reference>
<reference key="5">
    <citation type="journal article" date="2013" name="J. Cell Sci.">
        <title>MTR120/KIAA1383, a novel microtubule-associated protein, promotes microtubule stability and ensures cytokinesis.</title>
        <authorList>
            <person name="Fong K.W."/>
            <person name="Leung J.W."/>
            <person name="Li Y."/>
            <person name="Wang W."/>
            <person name="Feng L."/>
            <person name="Ma W."/>
            <person name="Liu D."/>
            <person name="Songyang Z."/>
            <person name="Chen J."/>
        </authorList>
    </citation>
    <scope>FUNCTION</scope>
    <scope>INTERACTION WITH MICROTUBULES</scope>
    <scope>SUBCELLULAR LOCATION</scope>
    <scope>TISSUE SPECIFICITY</scope>
</reference>
<proteinExistence type="evidence at protein level"/>
<organism>
    <name type="scientific">Homo sapiens</name>
    <name type="common">Human</name>
    <dbReference type="NCBI Taxonomy" id="9606"/>
    <lineage>
        <taxon>Eukaryota</taxon>
        <taxon>Metazoa</taxon>
        <taxon>Chordata</taxon>
        <taxon>Craniata</taxon>
        <taxon>Vertebrata</taxon>
        <taxon>Euteleostomi</taxon>
        <taxon>Mammalia</taxon>
        <taxon>Eutheria</taxon>
        <taxon>Euarchontoglires</taxon>
        <taxon>Primates</taxon>
        <taxon>Haplorrhini</taxon>
        <taxon>Catarrhini</taxon>
        <taxon>Hominidae</taxon>
        <taxon>Homo</taxon>
    </lineage>
</organism>
<dbReference type="EMBL" id="AB037804">
    <property type="protein sequence ID" value="BAA92621.1"/>
    <property type="status" value="ALT_INIT"/>
    <property type="molecule type" value="mRNA"/>
</dbReference>
<dbReference type="EMBL" id="AK290216">
    <property type="protein sequence ID" value="BAF82905.1"/>
    <property type="molecule type" value="mRNA"/>
</dbReference>
<dbReference type="EMBL" id="AL451083">
    <property type="status" value="NOT_ANNOTATED_CDS"/>
    <property type="molecule type" value="Genomic_DNA"/>
</dbReference>
<dbReference type="EMBL" id="BC036663">
    <property type="protein sequence ID" value="AAH36663.1"/>
    <property type="molecule type" value="mRNA"/>
</dbReference>
<dbReference type="EMBL" id="BC109122">
    <property type="protein sequence ID" value="AAI09123.2"/>
    <property type="molecule type" value="mRNA"/>
</dbReference>
<dbReference type="CCDS" id="CCDS44334.2"/>
<dbReference type="RefSeq" id="NP_061963.2">
    <property type="nucleotide sequence ID" value="NM_019090.2"/>
</dbReference>
<dbReference type="BioGRID" id="120084">
    <property type="interactions" value="31"/>
</dbReference>
<dbReference type="FunCoup" id="Q9P2G4">
    <property type="interactions" value="4"/>
</dbReference>
<dbReference type="IntAct" id="Q9P2G4">
    <property type="interactions" value="28"/>
</dbReference>
<dbReference type="STRING" id="9606.ENSP00000403208"/>
<dbReference type="GlyConnect" id="1514">
    <property type="glycosylation" value="11 N-Linked glycans (1 site)"/>
</dbReference>
<dbReference type="GlyCosmos" id="Q9P2G4">
    <property type="glycosylation" value="1 site, 11 glycans"/>
</dbReference>
<dbReference type="GlyGen" id="Q9P2G4">
    <property type="glycosylation" value="4 sites, 11 N-linked glycans (1 site), 1 O-linked glycan (1 site)"/>
</dbReference>
<dbReference type="iPTMnet" id="Q9P2G4"/>
<dbReference type="PhosphoSitePlus" id="Q9P2G4"/>
<dbReference type="BioMuta" id="MAP10"/>
<dbReference type="DMDM" id="14286071"/>
<dbReference type="jPOST" id="Q9P2G4"/>
<dbReference type="MassIVE" id="Q9P2G4"/>
<dbReference type="PaxDb" id="9606-ENSP00000403208"/>
<dbReference type="PeptideAtlas" id="Q9P2G4"/>
<dbReference type="ProteomicsDB" id="83813"/>
<dbReference type="Antibodypedia" id="64568">
    <property type="antibodies" value="30 antibodies from 8 providers"/>
</dbReference>
<dbReference type="DNASU" id="54627"/>
<dbReference type="Ensembl" id="ENST00000418460.4">
    <property type="protein sequence ID" value="ENSP00000403208.2"/>
    <property type="gene ID" value="ENSG00000212916.6"/>
</dbReference>
<dbReference type="GeneID" id="54627"/>
<dbReference type="KEGG" id="hsa:54627"/>
<dbReference type="MANE-Select" id="ENST00000418460.4">
    <property type="protein sequence ID" value="ENSP00000403208.2"/>
    <property type="RefSeq nucleotide sequence ID" value="NM_019090.3"/>
    <property type="RefSeq protein sequence ID" value="NP_061963.3"/>
</dbReference>
<dbReference type="UCSC" id="uc001hvh.3">
    <property type="organism name" value="human"/>
</dbReference>
<dbReference type="AGR" id="HGNC:29265"/>
<dbReference type="CTD" id="54627"/>
<dbReference type="DisGeNET" id="54627"/>
<dbReference type="GeneCards" id="MAP10"/>
<dbReference type="HGNC" id="HGNC:29265">
    <property type="gene designation" value="MAP10"/>
</dbReference>
<dbReference type="HPA" id="ENSG00000212916">
    <property type="expression patterns" value="Low tissue specificity"/>
</dbReference>
<dbReference type="MIM" id="618551">
    <property type="type" value="gene"/>
</dbReference>
<dbReference type="neXtProt" id="NX_Q9P2G4"/>
<dbReference type="OpenTargets" id="ENSG00000212916"/>
<dbReference type="PharmGKB" id="PA142671610"/>
<dbReference type="VEuPathDB" id="HostDB:ENSG00000212916"/>
<dbReference type="eggNOG" id="ENOG502QVBX">
    <property type="taxonomic scope" value="Eukaryota"/>
</dbReference>
<dbReference type="GeneTree" id="ENSGT00390000008459"/>
<dbReference type="HOGENOM" id="CLU_014844_0_0_1"/>
<dbReference type="InParanoid" id="Q9P2G4"/>
<dbReference type="OrthoDB" id="69809at2759"/>
<dbReference type="PAN-GO" id="Q9P2G4">
    <property type="GO annotations" value="9 GO annotations based on evolutionary models"/>
</dbReference>
<dbReference type="PhylomeDB" id="Q9P2G4"/>
<dbReference type="TreeFam" id="TF338644"/>
<dbReference type="PathwayCommons" id="Q9P2G4"/>
<dbReference type="SignaLink" id="Q9P2G4"/>
<dbReference type="BioGRID-ORCS" id="54627">
    <property type="hits" value="7 hits in 1144 CRISPR screens"/>
</dbReference>
<dbReference type="ChiTaRS" id="MAP10">
    <property type="organism name" value="human"/>
</dbReference>
<dbReference type="GenomeRNAi" id="54627"/>
<dbReference type="Pharos" id="Q9P2G4">
    <property type="development level" value="Tbio"/>
</dbReference>
<dbReference type="PRO" id="PR:Q9P2G4"/>
<dbReference type="Proteomes" id="UP000005640">
    <property type="component" value="Chromosome 1"/>
</dbReference>
<dbReference type="RNAct" id="Q9P2G4">
    <property type="molecule type" value="protein"/>
</dbReference>
<dbReference type="Bgee" id="ENSG00000212916">
    <property type="expression patterns" value="Expressed in male germ line stem cell (sensu Vertebrata) in testis and 101 other cell types or tissues"/>
</dbReference>
<dbReference type="GO" id="GO:0005813">
    <property type="term" value="C:centrosome"/>
    <property type="evidence" value="ECO:0000314"/>
    <property type="project" value="UniProtKB"/>
</dbReference>
<dbReference type="GO" id="GO:0005881">
    <property type="term" value="C:cytoplasmic microtubule"/>
    <property type="evidence" value="ECO:0000314"/>
    <property type="project" value="UniProtKB"/>
</dbReference>
<dbReference type="GO" id="GO:0030496">
    <property type="term" value="C:midbody"/>
    <property type="evidence" value="ECO:0000314"/>
    <property type="project" value="UniProtKB"/>
</dbReference>
<dbReference type="GO" id="GO:1990023">
    <property type="term" value="C:mitotic spindle midzone"/>
    <property type="evidence" value="ECO:0000314"/>
    <property type="project" value="UniProtKB"/>
</dbReference>
<dbReference type="GO" id="GO:0097431">
    <property type="term" value="C:mitotic spindle pole"/>
    <property type="evidence" value="ECO:0000314"/>
    <property type="project" value="UniProtKB"/>
</dbReference>
<dbReference type="GO" id="GO:0008017">
    <property type="term" value="F:microtubule binding"/>
    <property type="evidence" value="ECO:0000314"/>
    <property type="project" value="UniProtKB"/>
</dbReference>
<dbReference type="GO" id="GO:0051301">
    <property type="term" value="P:cell division"/>
    <property type="evidence" value="ECO:0007669"/>
    <property type="project" value="UniProtKB-KW"/>
</dbReference>
<dbReference type="GO" id="GO:0031122">
    <property type="term" value="P:cytoplasmic microtubule organization"/>
    <property type="evidence" value="ECO:0000315"/>
    <property type="project" value="UniProtKB"/>
</dbReference>
<dbReference type="GO" id="GO:0051256">
    <property type="term" value="P:mitotic spindle midzone assembly"/>
    <property type="evidence" value="ECO:0000315"/>
    <property type="project" value="UniProtKB"/>
</dbReference>
<dbReference type="GO" id="GO:0032467">
    <property type="term" value="P:positive regulation of cytokinesis"/>
    <property type="evidence" value="ECO:0000315"/>
    <property type="project" value="UniProtKB"/>
</dbReference>
<dbReference type="GO" id="GO:0032886">
    <property type="term" value="P:regulation of microtubule-based process"/>
    <property type="evidence" value="ECO:0000315"/>
    <property type="project" value="UniProtKB"/>
</dbReference>
<dbReference type="InterPro" id="IPR039302">
    <property type="entry name" value="MAP10"/>
</dbReference>
<dbReference type="InterPro" id="IPR026679">
    <property type="entry name" value="MAP10_C-term"/>
</dbReference>
<dbReference type="PANTHER" id="PTHR21831">
    <property type="entry name" value="MICROTUBULE-ASSOCIATED PROTEIN 10"/>
    <property type="match status" value="1"/>
</dbReference>
<dbReference type="PANTHER" id="PTHR21831:SF2">
    <property type="entry name" value="MICROTUBULE-ASSOCIATED PROTEIN 10"/>
    <property type="match status" value="1"/>
</dbReference>
<dbReference type="Pfam" id="PF14925">
    <property type="entry name" value="HPHLAWLY"/>
    <property type="match status" value="1"/>
</dbReference>
<dbReference type="Pfam" id="PF14924">
    <property type="entry name" value="MAP10_N"/>
    <property type="match status" value="1"/>
</dbReference>